<protein>
    <recommendedName>
        <fullName evidence="1">3-dehydroquinate dehydratase</fullName>
        <shortName evidence="1">3-dehydroquinase</shortName>
        <ecNumber evidence="1">4.2.1.10</ecNumber>
    </recommendedName>
    <alternativeName>
        <fullName evidence="1">Type II DHQase</fullName>
    </alternativeName>
</protein>
<organism>
    <name type="scientific">Legionella pneumophila (strain Corby)</name>
    <dbReference type="NCBI Taxonomy" id="400673"/>
    <lineage>
        <taxon>Bacteria</taxon>
        <taxon>Pseudomonadati</taxon>
        <taxon>Pseudomonadota</taxon>
        <taxon>Gammaproteobacteria</taxon>
        <taxon>Legionellales</taxon>
        <taxon>Legionellaceae</taxon>
        <taxon>Legionella</taxon>
    </lineage>
</organism>
<keyword id="KW-0028">Amino-acid biosynthesis</keyword>
<keyword id="KW-0057">Aromatic amino acid biosynthesis</keyword>
<keyword id="KW-0456">Lyase</keyword>
<name>AROQ_LEGPC</name>
<sequence>MKKILVLHGPNLNLLGSREPSIYGHASLTEINGDLIQEADNAGIRLSCFQSNAEAELIQAVHQAGIDKINYIIINPAAFTHTSIALRDALSAVAIPFIEVHLSNIFSRETFRHHSYFSDIAVGVISGLGTKGYLLALQAIIKELK</sequence>
<gene>
    <name evidence="1" type="primary">aroQ</name>
    <name type="ordered locus">LPC_2879</name>
</gene>
<reference key="1">
    <citation type="submission" date="2006-11" db="EMBL/GenBank/DDBJ databases">
        <title>Identification and characterization of a new conjugation/ type IVA secretion system (trb/tra) of L. pneumophila Corby localized on a mobile genomic island.</title>
        <authorList>
            <person name="Gloeckner G."/>
            <person name="Albert-Weissenberger C."/>
            <person name="Weinmann E."/>
            <person name="Jacobi S."/>
            <person name="Schunder E."/>
            <person name="Steinert M."/>
            <person name="Buchrieser C."/>
            <person name="Hacker J."/>
            <person name="Heuner K."/>
        </authorList>
    </citation>
    <scope>NUCLEOTIDE SEQUENCE [LARGE SCALE GENOMIC DNA]</scope>
    <source>
        <strain>Corby</strain>
    </source>
</reference>
<comment type="function">
    <text evidence="1">Catalyzes a trans-dehydration via an enolate intermediate.</text>
</comment>
<comment type="catalytic activity">
    <reaction evidence="1">
        <text>3-dehydroquinate = 3-dehydroshikimate + H2O</text>
        <dbReference type="Rhea" id="RHEA:21096"/>
        <dbReference type="ChEBI" id="CHEBI:15377"/>
        <dbReference type="ChEBI" id="CHEBI:16630"/>
        <dbReference type="ChEBI" id="CHEBI:32364"/>
        <dbReference type="EC" id="4.2.1.10"/>
    </reaction>
</comment>
<comment type="pathway">
    <text evidence="1">Metabolic intermediate biosynthesis; chorismate biosynthesis; chorismate from D-erythrose 4-phosphate and phosphoenolpyruvate: step 3/7.</text>
</comment>
<comment type="subunit">
    <text evidence="1">Homododecamer.</text>
</comment>
<comment type="similarity">
    <text evidence="1">Belongs to the type-II 3-dehydroquinase family.</text>
</comment>
<accession>A5IHD0</accession>
<evidence type="ECO:0000255" key="1">
    <source>
        <dbReference type="HAMAP-Rule" id="MF_00169"/>
    </source>
</evidence>
<feature type="chain" id="PRO_1000077046" description="3-dehydroquinate dehydratase">
    <location>
        <begin position="1"/>
        <end position="145"/>
    </location>
</feature>
<feature type="active site" description="Proton acceptor" evidence="1">
    <location>
        <position position="23"/>
    </location>
</feature>
<feature type="active site" description="Proton donor" evidence="1">
    <location>
        <position position="101"/>
    </location>
</feature>
<feature type="binding site" evidence="1">
    <location>
        <position position="75"/>
    </location>
    <ligand>
        <name>substrate</name>
    </ligand>
</feature>
<feature type="binding site" evidence="1">
    <location>
        <position position="81"/>
    </location>
    <ligand>
        <name>substrate</name>
    </ligand>
</feature>
<feature type="binding site" evidence="1">
    <location>
        <position position="88"/>
    </location>
    <ligand>
        <name>substrate</name>
    </ligand>
</feature>
<feature type="binding site" evidence="1">
    <location>
        <begin position="102"/>
        <end position="103"/>
    </location>
    <ligand>
        <name>substrate</name>
    </ligand>
</feature>
<feature type="binding site" evidence="1">
    <location>
        <position position="112"/>
    </location>
    <ligand>
        <name>substrate</name>
    </ligand>
</feature>
<feature type="site" description="Transition state stabilizer" evidence="1">
    <location>
        <position position="18"/>
    </location>
</feature>
<proteinExistence type="inferred from homology"/>
<dbReference type="EC" id="4.2.1.10" evidence="1"/>
<dbReference type="EMBL" id="CP000675">
    <property type="protein sequence ID" value="ABQ56780.1"/>
    <property type="molecule type" value="Genomic_DNA"/>
</dbReference>
<dbReference type="RefSeq" id="WP_011213103.1">
    <property type="nucleotide sequence ID" value="NZ_JAPMSS010000006.1"/>
</dbReference>
<dbReference type="SMR" id="A5IHD0"/>
<dbReference type="KEGG" id="lpc:LPC_2879"/>
<dbReference type="HOGENOM" id="CLU_090968_1_0_6"/>
<dbReference type="UniPathway" id="UPA00053">
    <property type="reaction ID" value="UER00086"/>
</dbReference>
<dbReference type="GO" id="GO:0003855">
    <property type="term" value="F:3-dehydroquinate dehydratase activity"/>
    <property type="evidence" value="ECO:0007669"/>
    <property type="project" value="UniProtKB-UniRule"/>
</dbReference>
<dbReference type="GO" id="GO:0008652">
    <property type="term" value="P:amino acid biosynthetic process"/>
    <property type="evidence" value="ECO:0007669"/>
    <property type="project" value="UniProtKB-KW"/>
</dbReference>
<dbReference type="GO" id="GO:0009073">
    <property type="term" value="P:aromatic amino acid family biosynthetic process"/>
    <property type="evidence" value="ECO:0007669"/>
    <property type="project" value="UniProtKB-KW"/>
</dbReference>
<dbReference type="GO" id="GO:0009423">
    <property type="term" value="P:chorismate biosynthetic process"/>
    <property type="evidence" value="ECO:0007669"/>
    <property type="project" value="UniProtKB-UniRule"/>
</dbReference>
<dbReference type="GO" id="GO:0019631">
    <property type="term" value="P:quinate catabolic process"/>
    <property type="evidence" value="ECO:0007669"/>
    <property type="project" value="TreeGrafter"/>
</dbReference>
<dbReference type="CDD" id="cd00466">
    <property type="entry name" value="DHQase_II"/>
    <property type="match status" value="1"/>
</dbReference>
<dbReference type="Gene3D" id="3.40.50.9100">
    <property type="entry name" value="Dehydroquinase, class II"/>
    <property type="match status" value="1"/>
</dbReference>
<dbReference type="HAMAP" id="MF_00169">
    <property type="entry name" value="AroQ"/>
    <property type="match status" value="1"/>
</dbReference>
<dbReference type="InterPro" id="IPR001874">
    <property type="entry name" value="DHquinase_II"/>
</dbReference>
<dbReference type="InterPro" id="IPR018509">
    <property type="entry name" value="DHquinase_II_CS"/>
</dbReference>
<dbReference type="InterPro" id="IPR036441">
    <property type="entry name" value="DHquinase_II_sf"/>
</dbReference>
<dbReference type="NCBIfam" id="TIGR01088">
    <property type="entry name" value="aroQ"/>
    <property type="match status" value="1"/>
</dbReference>
<dbReference type="NCBIfam" id="NF003804">
    <property type="entry name" value="PRK05395.1-1"/>
    <property type="match status" value="1"/>
</dbReference>
<dbReference type="NCBIfam" id="NF003805">
    <property type="entry name" value="PRK05395.1-2"/>
    <property type="match status" value="1"/>
</dbReference>
<dbReference type="NCBIfam" id="NF003806">
    <property type="entry name" value="PRK05395.1-3"/>
    <property type="match status" value="1"/>
</dbReference>
<dbReference type="NCBIfam" id="NF003807">
    <property type="entry name" value="PRK05395.1-4"/>
    <property type="match status" value="1"/>
</dbReference>
<dbReference type="PANTHER" id="PTHR21272">
    <property type="entry name" value="CATABOLIC 3-DEHYDROQUINASE"/>
    <property type="match status" value="1"/>
</dbReference>
<dbReference type="PANTHER" id="PTHR21272:SF3">
    <property type="entry name" value="CATABOLIC 3-DEHYDROQUINASE"/>
    <property type="match status" value="1"/>
</dbReference>
<dbReference type="Pfam" id="PF01220">
    <property type="entry name" value="DHquinase_II"/>
    <property type="match status" value="1"/>
</dbReference>
<dbReference type="PIRSF" id="PIRSF001399">
    <property type="entry name" value="DHquinase_II"/>
    <property type="match status" value="1"/>
</dbReference>
<dbReference type="SUPFAM" id="SSF52304">
    <property type="entry name" value="Type II 3-dehydroquinate dehydratase"/>
    <property type="match status" value="1"/>
</dbReference>
<dbReference type="PROSITE" id="PS01029">
    <property type="entry name" value="DEHYDROQUINASE_II"/>
    <property type="match status" value="1"/>
</dbReference>